<dbReference type="EC" id="1.7.1.13" evidence="1"/>
<dbReference type="EMBL" id="CP000901">
    <property type="protein sequence ID" value="ABX87245.1"/>
    <property type="molecule type" value="Genomic_DNA"/>
</dbReference>
<dbReference type="RefSeq" id="WP_002212122.1">
    <property type="nucleotide sequence ID" value="NZ_CP009935.1"/>
</dbReference>
<dbReference type="SMR" id="A9R2J3"/>
<dbReference type="GeneID" id="57977527"/>
<dbReference type="KEGG" id="ypg:YpAngola_A3157"/>
<dbReference type="PATRIC" id="fig|349746.12.peg.4216"/>
<dbReference type="UniPathway" id="UPA00392"/>
<dbReference type="GO" id="GO:0005737">
    <property type="term" value="C:cytoplasm"/>
    <property type="evidence" value="ECO:0007669"/>
    <property type="project" value="UniProtKB-SubCell"/>
</dbReference>
<dbReference type="GO" id="GO:0033739">
    <property type="term" value="F:preQ1 synthase activity"/>
    <property type="evidence" value="ECO:0007669"/>
    <property type="project" value="UniProtKB-UniRule"/>
</dbReference>
<dbReference type="GO" id="GO:0008616">
    <property type="term" value="P:queuosine biosynthetic process"/>
    <property type="evidence" value="ECO:0007669"/>
    <property type="project" value="UniProtKB-UniRule"/>
</dbReference>
<dbReference type="GO" id="GO:0006400">
    <property type="term" value="P:tRNA modification"/>
    <property type="evidence" value="ECO:0007669"/>
    <property type="project" value="UniProtKB-UniRule"/>
</dbReference>
<dbReference type="Gene3D" id="3.30.1130.10">
    <property type="match status" value="2"/>
</dbReference>
<dbReference type="HAMAP" id="MF_00817">
    <property type="entry name" value="QueF_type2"/>
    <property type="match status" value="1"/>
</dbReference>
<dbReference type="InterPro" id="IPR043133">
    <property type="entry name" value="GTP-CH-I_C/QueF"/>
</dbReference>
<dbReference type="InterPro" id="IPR050084">
    <property type="entry name" value="NADPH_dep_7-cyano-7-deazaG_red"/>
</dbReference>
<dbReference type="InterPro" id="IPR029500">
    <property type="entry name" value="QueF"/>
</dbReference>
<dbReference type="InterPro" id="IPR029139">
    <property type="entry name" value="QueF_N"/>
</dbReference>
<dbReference type="InterPro" id="IPR016428">
    <property type="entry name" value="QueF_type2"/>
</dbReference>
<dbReference type="NCBIfam" id="TIGR03138">
    <property type="entry name" value="QueF"/>
    <property type="match status" value="1"/>
</dbReference>
<dbReference type="PANTHER" id="PTHR34354">
    <property type="entry name" value="NADPH-DEPENDENT 7-CYANO-7-DEAZAGUANINE REDUCTASE"/>
    <property type="match status" value="1"/>
</dbReference>
<dbReference type="PANTHER" id="PTHR34354:SF1">
    <property type="entry name" value="NADPH-DEPENDENT 7-CYANO-7-DEAZAGUANINE REDUCTASE"/>
    <property type="match status" value="1"/>
</dbReference>
<dbReference type="Pfam" id="PF14489">
    <property type="entry name" value="QueF"/>
    <property type="match status" value="1"/>
</dbReference>
<dbReference type="Pfam" id="PF14819">
    <property type="entry name" value="QueF_N"/>
    <property type="match status" value="1"/>
</dbReference>
<dbReference type="PIRSF" id="PIRSF004750">
    <property type="entry name" value="Nitrile_oxidored_YqcD_prd"/>
    <property type="match status" value="1"/>
</dbReference>
<dbReference type="SUPFAM" id="SSF55620">
    <property type="entry name" value="Tetrahydrobiopterin biosynthesis enzymes-like"/>
    <property type="match status" value="1"/>
</dbReference>
<proteinExistence type="inferred from homology"/>
<comment type="function">
    <text evidence="1">Catalyzes the NADPH-dependent reduction of 7-cyano-7-deazaguanine (preQ0) to 7-aminomethyl-7-deazaguanine (preQ1).</text>
</comment>
<comment type="catalytic activity">
    <reaction evidence="1">
        <text>7-aminomethyl-7-carbaguanine + 2 NADP(+) = 7-cyano-7-deazaguanine + 2 NADPH + 3 H(+)</text>
        <dbReference type="Rhea" id="RHEA:13409"/>
        <dbReference type="ChEBI" id="CHEBI:15378"/>
        <dbReference type="ChEBI" id="CHEBI:45075"/>
        <dbReference type="ChEBI" id="CHEBI:57783"/>
        <dbReference type="ChEBI" id="CHEBI:58349"/>
        <dbReference type="ChEBI" id="CHEBI:58703"/>
        <dbReference type="EC" id="1.7.1.13"/>
    </reaction>
</comment>
<comment type="pathway">
    <text evidence="1">tRNA modification; tRNA-queuosine biosynthesis.</text>
</comment>
<comment type="subunit">
    <text evidence="1">Homodimer.</text>
</comment>
<comment type="subcellular location">
    <subcellularLocation>
        <location evidence="1">Cytoplasm</location>
    </subcellularLocation>
</comment>
<comment type="similarity">
    <text evidence="1">Belongs to the GTP cyclohydrolase I family. QueF type 2 subfamily.</text>
</comment>
<evidence type="ECO:0000255" key="1">
    <source>
        <dbReference type="HAMAP-Rule" id="MF_00817"/>
    </source>
</evidence>
<protein>
    <recommendedName>
        <fullName evidence="1">NADPH-dependent 7-cyano-7-deazaguanine reductase</fullName>
        <ecNumber evidence="1">1.7.1.13</ecNumber>
    </recommendedName>
    <alternativeName>
        <fullName evidence="1">7-cyano-7-carbaguanine reductase</fullName>
    </alternativeName>
    <alternativeName>
        <fullName evidence="1">NADPH-dependent nitrile oxidoreductase</fullName>
    </alternativeName>
    <alternativeName>
        <fullName evidence="1">PreQ(0) reductase</fullName>
    </alternativeName>
</protein>
<gene>
    <name evidence="1" type="primary">queF</name>
    <name type="ordered locus">YpAngola_A3157</name>
</gene>
<sequence length="281" mass="32082">MSSYQNHKALAELTLGKPTAYCDYYDATLLQAVPRSMNREPLGLYPDNLPFHGADIWTLYELSWLNSNGLPQVAVGEISLNADSINLIESKSFKLYLNSFNQTIFADKESVRMTLQRDLAACAQGNVSVALYDLDEITGQPISNFNGECLDKQDIRIDSYEFNADYLQGAAGKDHVEESLVSHLLKSNCLITHQPDWGSVQIHYRGPQIDHEALLRYLVSFRHHNEFHEQCVERIFNDIMRFCQPETLTVYARYTRRGGLDINPWRSNTDFVPLTGRLARQ</sequence>
<feature type="chain" id="PRO_1000213088" description="NADPH-dependent 7-cyano-7-deazaguanine reductase">
    <location>
        <begin position="1"/>
        <end position="281"/>
    </location>
</feature>
<feature type="active site" description="Thioimide intermediate" evidence="1">
    <location>
        <position position="189"/>
    </location>
</feature>
<feature type="active site" description="Proton donor" evidence="1">
    <location>
        <position position="196"/>
    </location>
</feature>
<feature type="binding site" evidence="1">
    <location>
        <begin position="88"/>
        <end position="90"/>
    </location>
    <ligand>
        <name>substrate</name>
    </ligand>
</feature>
<feature type="binding site" evidence="1">
    <location>
        <begin position="90"/>
        <end position="91"/>
    </location>
    <ligand>
        <name>NADPH</name>
        <dbReference type="ChEBI" id="CHEBI:57783"/>
    </ligand>
</feature>
<feature type="binding site" evidence="1">
    <location>
        <begin position="228"/>
        <end position="229"/>
    </location>
    <ligand>
        <name>substrate</name>
    </ligand>
</feature>
<feature type="binding site" evidence="1">
    <location>
        <begin position="257"/>
        <end position="258"/>
    </location>
    <ligand>
        <name>NADPH</name>
        <dbReference type="ChEBI" id="CHEBI:57783"/>
    </ligand>
</feature>
<accession>A9R2J3</accession>
<reference key="1">
    <citation type="journal article" date="2010" name="J. Bacteriol.">
        <title>Genome sequence of the deep-rooted Yersinia pestis strain Angola reveals new insights into the evolution and pangenome of the plague bacterium.</title>
        <authorList>
            <person name="Eppinger M."/>
            <person name="Worsham P.L."/>
            <person name="Nikolich M.P."/>
            <person name="Riley D.R."/>
            <person name="Sebastian Y."/>
            <person name="Mou S."/>
            <person name="Achtman M."/>
            <person name="Lindler L.E."/>
            <person name="Ravel J."/>
        </authorList>
    </citation>
    <scope>NUCLEOTIDE SEQUENCE [LARGE SCALE GENOMIC DNA]</scope>
    <source>
        <strain>Angola</strain>
    </source>
</reference>
<keyword id="KW-0963">Cytoplasm</keyword>
<keyword id="KW-0521">NADP</keyword>
<keyword id="KW-0560">Oxidoreductase</keyword>
<keyword id="KW-0671">Queuosine biosynthesis</keyword>
<organism>
    <name type="scientific">Yersinia pestis bv. Antiqua (strain Angola)</name>
    <dbReference type="NCBI Taxonomy" id="349746"/>
    <lineage>
        <taxon>Bacteria</taxon>
        <taxon>Pseudomonadati</taxon>
        <taxon>Pseudomonadota</taxon>
        <taxon>Gammaproteobacteria</taxon>
        <taxon>Enterobacterales</taxon>
        <taxon>Yersiniaceae</taxon>
        <taxon>Yersinia</taxon>
    </lineage>
</organism>
<name>QUEF_YERPG</name>